<gene>
    <name type="primary">glb-1</name>
    <name type="synonym">cbg-1</name>
    <name type="synonym">glo</name>
    <name type="ORF">CBG06867</name>
</gene>
<proteinExistence type="evidence at transcript level"/>
<reference key="1">
    <citation type="submission" date="1996-02" db="EMBL/GenBank/DDBJ databases">
        <authorList>
            <person name="Kloek A.P."/>
            <person name="Goldberg D.E."/>
        </authorList>
    </citation>
    <scope>NUCLEOTIDE SEQUENCE [GENOMIC DNA / MRNA]</scope>
</reference>
<reference key="2">
    <citation type="journal article" date="2003" name="PLoS Biol.">
        <title>The genome sequence of Caenorhabditis briggsae: a platform for comparative genomics.</title>
        <authorList>
            <person name="Stein L.D."/>
            <person name="Bao Z."/>
            <person name="Blasiar D."/>
            <person name="Blumenthal T."/>
            <person name="Brent M.R."/>
            <person name="Chen N."/>
            <person name="Chinwalla A."/>
            <person name="Clarke L."/>
            <person name="Clee C."/>
            <person name="Coghlan A."/>
            <person name="Coulson A."/>
            <person name="D'Eustachio P."/>
            <person name="Fitch D.H.A."/>
            <person name="Fulton L.A."/>
            <person name="Fulton R.E."/>
            <person name="Griffiths-Jones S."/>
            <person name="Harris T.W."/>
            <person name="Hillier L.W."/>
            <person name="Kamath R."/>
            <person name="Kuwabara P.E."/>
            <person name="Mardis E.R."/>
            <person name="Marra M.A."/>
            <person name="Miner T.L."/>
            <person name="Minx P."/>
            <person name="Mullikin J.C."/>
            <person name="Plumb R.W."/>
            <person name="Rogers J."/>
            <person name="Schein J.E."/>
            <person name="Sohrmann M."/>
            <person name="Spieth J."/>
            <person name="Stajich J.E."/>
            <person name="Wei C."/>
            <person name="Willey D."/>
            <person name="Wilson R.K."/>
            <person name="Durbin R.M."/>
            <person name="Waterston R.H."/>
        </authorList>
    </citation>
    <scope>NUCLEOTIDE SEQUENCE [LARGE SCALE GENOMIC DNA]</scope>
    <source>
        <strain>AF16</strain>
    </source>
</reference>
<organism>
    <name type="scientific">Caenorhabditis briggsae</name>
    <dbReference type="NCBI Taxonomy" id="6238"/>
    <lineage>
        <taxon>Eukaryota</taxon>
        <taxon>Metazoa</taxon>
        <taxon>Ecdysozoa</taxon>
        <taxon>Nematoda</taxon>
        <taxon>Chromadorea</taxon>
        <taxon>Rhabditida</taxon>
        <taxon>Rhabditina</taxon>
        <taxon>Rhabditomorpha</taxon>
        <taxon>Rhabditoidea</taxon>
        <taxon>Rhabditidae</taxon>
        <taxon>Peloderinae</taxon>
        <taxon>Caenorhabditis</taxon>
    </lineage>
</organism>
<evidence type="ECO:0000250" key="1"/>
<evidence type="ECO:0000255" key="2">
    <source>
        <dbReference type="PROSITE-ProRule" id="PRU00238"/>
    </source>
</evidence>
<evidence type="ECO:0000305" key="3"/>
<keyword id="KW-0963">Cytoplasm</keyword>
<keyword id="KW-0349">Heme</keyword>
<keyword id="KW-0408">Iron</keyword>
<keyword id="KW-0479">Metal-binding</keyword>
<keyword id="KW-0561">Oxygen transport</keyword>
<keyword id="KW-1185">Reference proteome</keyword>
<keyword id="KW-0813">Transport</keyword>
<sequence length="160" mass="18591">MSMTRQEIQDLCVKSLEEKMVGTTDKGIANGNGFYQYFFTNFPDLRVYFKGAEKFTAEDVKKSERFDKQGQRILLACHLIANVFTNEEVFKAYVRETINRHRIYKMDPALWMAFFTVFTGYLESTGSLNDQQKAAWMALGKEFNAECQVHLKNSNLPYVH</sequence>
<comment type="function">
    <text evidence="1">May be a globin and may play a role in oxygen transport.</text>
</comment>
<comment type="subcellular location">
    <subcellularLocation>
        <location evidence="3">Cytoplasm</location>
    </subcellularLocation>
</comment>
<comment type="similarity">
    <text evidence="3">Belongs to the globin family.</text>
</comment>
<comment type="caution">
    <text evidence="3">It is uncertain whether Met-1 or Met-3 is the initiator.</text>
</comment>
<protein>
    <recommendedName>
        <fullName>Globin-like protein</fullName>
    </recommendedName>
</protein>
<name>GLBH_CAEBR</name>
<feature type="chain" id="PRO_0000052462" description="Globin-like protein">
    <location>
        <begin position="1"/>
        <end position="160"/>
    </location>
</feature>
<feature type="domain" description="Globin" evidence="2">
    <location>
        <begin position="2"/>
        <end position="152"/>
    </location>
</feature>
<feature type="binding site" description="proximal binding residue" evidence="1">
    <location>
        <position position="101"/>
    </location>
    <ligand>
        <name>heme</name>
        <dbReference type="ChEBI" id="CHEBI:30413"/>
    </ligand>
    <ligandPart>
        <name>Fe</name>
        <dbReference type="ChEBI" id="CHEBI:18248"/>
    </ligandPart>
</feature>
<dbReference type="EMBL" id="U48291">
    <property type="protein sequence ID" value="AAA89169.1"/>
    <property type="molecule type" value="Genomic_DNA"/>
</dbReference>
<dbReference type="EMBL" id="U48290">
    <property type="protein sequence ID" value="AAA89169.1"/>
    <property type="status" value="JOINED"/>
    <property type="molecule type" value="Genomic_DNA"/>
</dbReference>
<dbReference type="EMBL" id="U48289">
    <property type="protein sequence ID" value="AAA89168.1"/>
    <property type="molecule type" value="mRNA"/>
</dbReference>
<dbReference type="EMBL" id="HE601347">
    <property type="protein sequence ID" value="CAP27100.1"/>
    <property type="molecule type" value="Genomic_DNA"/>
</dbReference>
<dbReference type="SMR" id="Q27302"/>
<dbReference type="FunCoup" id="Q27302">
    <property type="interactions" value="85"/>
</dbReference>
<dbReference type="STRING" id="6238.Q27302"/>
<dbReference type="EnsemblMetazoa" id="CBG06867.1">
    <property type="protein sequence ID" value="CBG06867.1"/>
    <property type="gene ID" value="WBGene00000312"/>
</dbReference>
<dbReference type="KEGG" id="cbr:CBG_06867"/>
<dbReference type="CTD" id="8584451"/>
<dbReference type="WormBase" id="CBG06867">
    <property type="protein sequence ID" value="CBP07494"/>
    <property type="gene ID" value="WBGene00000312"/>
    <property type="gene designation" value="Cbr-glb-1"/>
</dbReference>
<dbReference type="eggNOG" id="ENOG502SFTY">
    <property type="taxonomic scope" value="Eukaryota"/>
</dbReference>
<dbReference type="HOGENOM" id="CLU_099979_0_0_1"/>
<dbReference type="InParanoid" id="Q27302"/>
<dbReference type="OMA" id="DPALWMA"/>
<dbReference type="OrthoDB" id="5820458at2759"/>
<dbReference type="Proteomes" id="UP000008549">
    <property type="component" value="Unassembled WGS sequence"/>
</dbReference>
<dbReference type="GO" id="GO:0005737">
    <property type="term" value="C:cytoplasm"/>
    <property type="evidence" value="ECO:0007669"/>
    <property type="project" value="UniProtKB-SubCell"/>
</dbReference>
<dbReference type="GO" id="GO:0020037">
    <property type="term" value="F:heme binding"/>
    <property type="evidence" value="ECO:0007669"/>
    <property type="project" value="InterPro"/>
</dbReference>
<dbReference type="GO" id="GO:0005506">
    <property type="term" value="F:iron ion binding"/>
    <property type="evidence" value="ECO:0007669"/>
    <property type="project" value="InterPro"/>
</dbReference>
<dbReference type="GO" id="GO:0019825">
    <property type="term" value="F:oxygen binding"/>
    <property type="evidence" value="ECO:0007669"/>
    <property type="project" value="InterPro"/>
</dbReference>
<dbReference type="GO" id="GO:0005344">
    <property type="term" value="F:oxygen carrier activity"/>
    <property type="evidence" value="ECO:0007669"/>
    <property type="project" value="UniProtKB-KW"/>
</dbReference>
<dbReference type="CDD" id="cd01040">
    <property type="entry name" value="Mb-like"/>
    <property type="match status" value="1"/>
</dbReference>
<dbReference type="Gene3D" id="1.10.490.10">
    <property type="entry name" value="Globins"/>
    <property type="match status" value="1"/>
</dbReference>
<dbReference type="InterPro" id="IPR000971">
    <property type="entry name" value="Globin"/>
</dbReference>
<dbReference type="InterPro" id="IPR009050">
    <property type="entry name" value="Globin-like_sf"/>
</dbReference>
<dbReference type="InterPro" id="IPR012292">
    <property type="entry name" value="Globin/Proto"/>
</dbReference>
<dbReference type="InterPro" id="IPR012085">
    <property type="entry name" value="Globin_nematode"/>
</dbReference>
<dbReference type="InterPro" id="IPR044399">
    <property type="entry name" value="Mb-like_M"/>
</dbReference>
<dbReference type="Pfam" id="PF00042">
    <property type="entry name" value="Globin"/>
    <property type="match status" value="1"/>
</dbReference>
<dbReference type="PIRSF" id="PIRSF002026">
    <property type="entry name" value="Nematode_globin"/>
    <property type="match status" value="1"/>
</dbReference>
<dbReference type="SUPFAM" id="SSF46458">
    <property type="entry name" value="Globin-like"/>
    <property type="match status" value="1"/>
</dbReference>
<dbReference type="PROSITE" id="PS01033">
    <property type="entry name" value="GLOBIN"/>
    <property type="match status" value="1"/>
</dbReference>
<accession>Q27302</accession>
<accession>A8X390</accession>